<keyword id="KW-1185">Reference proteome</keyword>
<keyword id="KW-0687">Ribonucleoprotein</keyword>
<keyword id="KW-0689">Ribosomal protein</keyword>
<name>RL35_CLOPE</name>
<reference key="1">
    <citation type="journal article" date="2002" name="Proc. Natl. Acad. Sci. U.S.A.">
        <title>Complete genome sequence of Clostridium perfringens, an anaerobic flesh-eater.</title>
        <authorList>
            <person name="Shimizu T."/>
            <person name="Ohtani K."/>
            <person name="Hirakawa H."/>
            <person name="Ohshima K."/>
            <person name="Yamashita A."/>
            <person name="Shiba T."/>
            <person name="Ogasawara N."/>
            <person name="Hattori M."/>
            <person name="Kuhara S."/>
            <person name="Hayashi H."/>
        </authorList>
    </citation>
    <scope>NUCLEOTIDE SEQUENCE [LARGE SCALE GENOMIC DNA]</scope>
    <source>
        <strain>13 / Type A</strain>
    </source>
</reference>
<dbReference type="EMBL" id="BA000016">
    <property type="protein sequence ID" value="BAB81599.1"/>
    <property type="molecule type" value="Genomic_DNA"/>
</dbReference>
<dbReference type="RefSeq" id="WP_003451643.1">
    <property type="nucleotide sequence ID" value="NC_003366.1"/>
</dbReference>
<dbReference type="SMR" id="Q8XJ68"/>
<dbReference type="STRING" id="195102.gene:10491158"/>
<dbReference type="GeneID" id="93001574"/>
<dbReference type="KEGG" id="cpe:CPE1893"/>
<dbReference type="HOGENOM" id="CLU_169643_3_0_9"/>
<dbReference type="Proteomes" id="UP000000818">
    <property type="component" value="Chromosome"/>
</dbReference>
<dbReference type="GO" id="GO:0022625">
    <property type="term" value="C:cytosolic large ribosomal subunit"/>
    <property type="evidence" value="ECO:0007669"/>
    <property type="project" value="TreeGrafter"/>
</dbReference>
<dbReference type="GO" id="GO:0003735">
    <property type="term" value="F:structural constituent of ribosome"/>
    <property type="evidence" value="ECO:0007669"/>
    <property type="project" value="InterPro"/>
</dbReference>
<dbReference type="GO" id="GO:0006412">
    <property type="term" value="P:translation"/>
    <property type="evidence" value="ECO:0007669"/>
    <property type="project" value="UniProtKB-UniRule"/>
</dbReference>
<dbReference type="FunFam" id="4.10.410.60:FF:000001">
    <property type="entry name" value="50S ribosomal protein L35"/>
    <property type="match status" value="1"/>
</dbReference>
<dbReference type="Gene3D" id="4.10.410.60">
    <property type="match status" value="1"/>
</dbReference>
<dbReference type="HAMAP" id="MF_00514">
    <property type="entry name" value="Ribosomal_bL35"/>
    <property type="match status" value="1"/>
</dbReference>
<dbReference type="InterPro" id="IPR001706">
    <property type="entry name" value="Ribosomal_bL35"/>
</dbReference>
<dbReference type="InterPro" id="IPR021137">
    <property type="entry name" value="Ribosomal_bL35-like"/>
</dbReference>
<dbReference type="InterPro" id="IPR018265">
    <property type="entry name" value="Ribosomal_bL35_CS"/>
</dbReference>
<dbReference type="InterPro" id="IPR037229">
    <property type="entry name" value="Ribosomal_bL35_sf"/>
</dbReference>
<dbReference type="NCBIfam" id="TIGR00001">
    <property type="entry name" value="rpmI_bact"/>
    <property type="match status" value="1"/>
</dbReference>
<dbReference type="PANTHER" id="PTHR33343">
    <property type="entry name" value="54S RIBOSOMAL PROTEIN BL35M"/>
    <property type="match status" value="1"/>
</dbReference>
<dbReference type="PANTHER" id="PTHR33343:SF1">
    <property type="entry name" value="LARGE RIBOSOMAL SUBUNIT PROTEIN BL35M"/>
    <property type="match status" value="1"/>
</dbReference>
<dbReference type="Pfam" id="PF01632">
    <property type="entry name" value="Ribosomal_L35p"/>
    <property type="match status" value="1"/>
</dbReference>
<dbReference type="PRINTS" id="PR00064">
    <property type="entry name" value="RIBOSOMALL35"/>
</dbReference>
<dbReference type="SUPFAM" id="SSF143034">
    <property type="entry name" value="L35p-like"/>
    <property type="match status" value="1"/>
</dbReference>
<dbReference type="PROSITE" id="PS00936">
    <property type="entry name" value="RIBOSOMAL_L35"/>
    <property type="match status" value="1"/>
</dbReference>
<comment type="similarity">
    <text evidence="1">Belongs to the bacterial ribosomal protein bL35 family.</text>
</comment>
<sequence length="65" mass="7455">MPKMKTHRGAAKRFKKTGTGKLKRAHAFTSHILTKKSAKRKRNLRKTGYVSTAQEKAMKKLLPYL</sequence>
<proteinExistence type="inferred from homology"/>
<protein>
    <recommendedName>
        <fullName evidence="1">Large ribosomal subunit protein bL35</fullName>
    </recommendedName>
    <alternativeName>
        <fullName evidence="3">50S ribosomal protein L35</fullName>
    </alternativeName>
</protein>
<evidence type="ECO:0000255" key="1">
    <source>
        <dbReference type="HAMAP-Rule" id="MF_00514"/>
    </source>
</evidence>
<evidence type="ECO:0000256" key="2">
    <source>
        <dbReference type="SAM" id="MobiDB-lite"/>
    </source>
</evidence>
<evidence type="ECO:0000305" key="3"/>
<organism>
    <name type="scientific">Clostridium perfringens (strain 13 / Type A)</name>
    <dbReference type="NCBI Taxonomy" id="195102"/>
    <lineage>
        <taxon>Bacteria</taxon>
        <taxon>Bacillati</taxon>
        <taxon>Bacillota</taxon>
        <taxon>Clostridia</taxon>
        <taxon>Eubacteriales</taxon>
        <taxon>Clostridiaceae</taxon>
        <taxon>Clostridium</taxon>
    </lineage>
</organism>
<accession>Q8XJ68</accession>
<gene>
    <name evidence="1" type="primary">rpmI</name>
    <name type="ordered locus">CPE1893</name>
</gene>
<feature type="chain" id="PRO_0000177352" description="Large ribosomal subunit protein bL35">
    <location>
        <begin position="1"/>
        <end position="65"/>
    </location>
</feature>
<feature type="region of interest" description="Disordered" evidence="2">
    <location>
        <begin position="1"/>
        <end position="23"/>
    </location>
</feature>